<dbReference type="EMBL" id="X74121">
    <property type="protein sequence ID" value="CAA52218.1"/>
    <property type="molecule type" value="Genomic_DNA"/>
</dbReference>
<dbReference type="EMBL" id="AL009126">
    <property type="protein sequence ID" value="CAB13511.1"/>
    <property type="molecule type" value="Genomic_DNA"/>
</dbReference>
<dbReference type="PIR" id="D69623">
    <property type="entry name" value="D69623"/>
</dbReference>
<dbReference type="RefSeq" id="NP_389520.1">
    <property type="nucleotide sequence ID" value="NC_000964.3"/>
</dbReference>
<dbReference type="RefSeq" id="WP_003231949.1">
    <property type="nucleotide sequence ID" value="NZ_OZ025638.1"/>
</dbReference>
<dbReference type="SMR" id="P35538"/>
<dbReference type="FunCoup" id="P35538">
    <property type="interactions" value="148"/>
</dbReference>
<dbReference type="STRING" id="224308.BSU16380"/>
<dbReference type="PaxDb" id="224308-BSU16380"/>
<dbReference type="EnsemblBacteria" id="CAB13511">
    <property type="protein sequence ID" value="CAB13511"/>
    <property type="gene ID" value="BSU_16380"/>
</dbReference>
<dbReference type="GeneID" id="940128"/>
<dbReference type="KEGG" id="bsu:BSU16380"/>
<dbReference type="PATRIC" id="fig|224308.179.peg.1779"/>
<dbReference type="eggNOG" id="COG1377">
    <property type="taxonomic scope" value="Bacteria"/>
</dbReference>
<dbReference type="InParanoid" id="P35538"/>
<dbReference type="OrthoDB" id="9807950at2"/>
<dbReference type="PhylomeDB" id="P35538"/>
<dbReference type="BioCyc" id="BSUB:BSU16380-MONOMER"/>
<dbReference type="Proteomes" id="UP000001570">
    <property type="component" value="Chromosome"/>
</dbReference>
<dbReference type="GO" id="GO:0005886">
    <property type="term" value="C:plasma membrane"/>
    <property type="evidence" value="ECO:0000318"/>
    <property type="project" value="GO_Central"/>
</dbReference>
<dbReference type="GO" id="GO:0044780">
    <property type="term" value="P:bacterial-type flagellum assembly"/>
    <property type="evidence" value="ECO:0000315"/>
    <property type="project" value="CACAO"/>
</dbReference>
<dbReference type="GO" id="GO:0071978">
    <property type="term" value="P:bacterial-type flagellum-dependent swarming motility"/>
    <property type="evidence" value="ECO:0000315"/>
    <property type="project" value="CACAO"/>
</dbReference>
<dbReference type="GO" id="GO:0009306">
    <property type="term" value="P:protein secretion"/>
    <property type="evidence" value="ECO:0007669"/>
    <property type="project" value="InterPro"/>
</dbReference>
<dbReference type="FunFam" id="3.40.1690.10:FF:000001">
    <property type="entry name" value="Flagellar biosynthetic protein FlhB"/>
    <property type="match status" value="1"/>
</dbReference>
<dbReference type="Gene3D" id="6.10.250.2080">
    <property type="match status" value="1"/>
</dbReference>
<dbReference type="Gene3D" id="3.40.1690.10">
    <property type="entry name" value="secretion proteins EscU"/>
    <property type="match status" value="1"/>
</dbReference>
<dbReference type="InterPro" id="IPR006136">
    <property type="entry name" value="FlhB"/>
</dbReference>
<dbReference type="InterPro" id="IPR006135">
    <property type="entry name" value="T3SS_substrate_exporter"/>
</dbReference>
<dbReference type="InterPro" id="IPR029025">
    <property type="entry name" value="T3SS_substrate_exporter_C"/>
</dbReference>
<dbReference type="NCBIfam" id="TIGR00328">
    <property type="entry name" value="flhB"/>
    <property type="match status" value="1"/>
</dbReference>
<dbReference type="PANTHER" id="PTHR30531">
    <property type="entry name" value="FLAGELLAR BIOSYNTHETIC PROTEIN FLHB"/>
    <property type="match status" value="1"/>
</dbReference>
<dbReference type="PANTHER" id="PTHR30531:SF12">
    <property type="entry name" value="FLAGELLAR BIOSYNTHETIC PROTEIN FLHB"/>
    <property type="match status" value="1"/>
</dbReference>
<dbReference type="Pfam" id="PF01312">
    <property type="entry name" value="Bac_export_2"/>
    <property type="match status" value="1"/>
</dbReference>
<dbReference type="PRINTS" id="PR00950">
    <property type="entry name" value="TYPE3IMSPROT"/>
</dbReference>
<dbReference type="SUPFAM" id="SSF160544">
    <property type="entry name" value="EscU C-terminal domain-like"/>
    <property type="match status" value="1"/>
</dbReference>
<accession>P35538</accession>
<accession>O31746</accession>
<name>FLHB_BACSU</name>
<gene>
    <name type="primary">flhB</name>
    <name type="ordered locus">BSU16380</name>
</gene>
<organism>
    <name type="scientific">Bacillus subtilis (strain 168)</name>
    <dbReference type="NCBI Taxonomy" id="224308"/>
    <lineage>
        <taxon>Bacteria</taxon>
        <taxon>Bacillati</taxon>
        <taxon>Bacillota</taxon>
        <taxon>Bacilli</taxon>
        <taxon>Bacillales</taxon>
        <taxon>Bacillaceae</taxon>
        <taxon>Bacillus</taxon>
    </lineage>
</organism>
<feature type="chain" id="PRO_0000180944" description="Flagellar biosynthetic protein FlhB">
    <location>
        <begin position="1"/>
        <end position="360"/>
    </location>
</feature>
<feature type="transmembrane region" description="Helical" evidence="1">
    <location>
        <begin position="38"/>
        <end position="58"/>
    </location>
</feature>
<feature type="transmembrane region" description="Helical" evidence="1">
    <location>
        <begin position="94"/>
        <end position="114"/>
    </location>
</feature>
<feature type="transmembrane region" description="Helical" evidence="1">
    <location>
        <begin position="151"/>
        <end position="171"/>
    </location>
</feature>
<feature type="transmembrane region" description="Helical" evidence="1">
    <location>
        <begin position="196"/>
        <end position="216"/>
    </location>
</feature>
<feature type="sequence conflict" description="In Ref. 1; CAA52218." evidence="2" ref="1">
    <original>T</original>
    <variation>S</variation>
    <location>
        <position position="40"/>
    </location>
</feature>
<protein>
    <recommendedName>
        <fullName>Flagellar biosynthetic protein FlhB</fullName>
    </recommendedName>
</protein>
<sequence length="360" mass="41097">MKLRVDLQFFAGEKTEKATPKKRKDTRKKGQVAKSSDVNTAVSLLVIFLSLIAIGPYMRDRLLSFIETFYTESLTMKLSESNVHTLFVSLLKDMGMILAPILLVALVAGVVSNYMQVGFLFSAEVIQPKLEKLDPIKGFKRIYSMRAIVELIKSILKIVVVGFAAFAVLWLHYGEILRLPLLTPEEALSFVSKLTLWMGLSGAGALLILAGLDYLYQRFDYEKNIKMSKQDIKDEYKKSEGDPIIKSKIKQRQREMAMRRMMQEVPKADVIITNPTHYAIALKYDEEKMDAPYIVAKGVDHLALKIRKIAKEHDVMMVENRPLARALYDQVEIDQAVPEEFFKVLAEILAYVYKTKQKVY</sequence>
<reference key="1">
    <citation type="journal article" date="1993" name="Gene">
        <title>Bacillus subtilis flagellar proteins FliP, FliQ, FliR and FlhB are related to Shigella flexneri virulence factors.</title>
        <authorList>
            <person name="Carpenter P.B."/>
            <person name="Zuberi A.R."/>
            <person name="Ordal G.W."/>
        </authorList>
    </citation>
    <scope>NUCLEOTIDE SEQUENCE [GENOMIC DNA]</scope>
    <source>
        <strain>168 / OI1085</strain>
    </source>
</reference>
<reference key="2">
    <citation type="journal article" date="1997" name="Nature">
        <title>The complete genome sequence of the Gram-positive bacterium Bacillus subtilis.</title>
        <authorList>
            <person name="Kunst F."/>
            <person name="Ogasawara N."/>
            <person name="Moszer I."/>
            <person name="Albertini A.M."/>
            <person name="Alloni G."/>
            <person name="Azevedo V."/>
            <person name="Bertero M.G."/>
            <person name="Bessieres P."/>
            <person name="Bolotin A."/>
            <person name="Borchert S."/>
            <person name="Borriss R."/>
            <person name="Boursier L."/>
            <person name="Brans A."/>
            <person name="Braun M."/>
            <person name="Brignell S.C."/>
            <person name="Bron S."/>
            <person name="Brouillet S."/>
            <person name="Bruschi C.V."/>
            <person name="Caldwell B."/>
            <person name="Capuano V."/>
            <person name="Carter N.M."/>
            <person name="Choi S.-K."/>
            <person name="Codani J.-J."/>
            <person name="Connerton I.F."/>
            <person name="Cummings N.J."/>
            <person name="Daniel R.A."/>
            <person name="Denizot F."/>
            <person name="Devine K.M."/>
            <person name="Duesterhoeft A."/>
            <person name="Ehrlich S.D."/>
            <person name="Emmerson P.T."/>
            <person name="Entian K.-D."/>
            <person name="Errington J."/>
            <person name="Fabret C."/>
            <person name="Ferrari E."/>
            <person name="Foulger D."/>
            <person name="Fritz C."/>
            <person name="Fujita M."/>
            <person name="Fujita Y."/>
            <person name="Fuma S."/>
            <person name="Galizzi A."/>
            <person name="Galleron N."/>
            <person name="Ghim S.-Y."/>
            <person name="Glaser P."/>
            <person name="Goffeau A."/>
            <person name="Golightly E.J."/>
            <person name="Grandi G."/>
            <person name="Guiseppi G."/>
            <person name="Guy B.J."/>
            <person name="Haga K."/>
            <person name="Haiech J."/>
            <person name="Harwood C.R."/>
            <person name="Henaut A."/>
            <person name="Hilbert H."/>
            <person name="Holsappel S."/>
            <person name="Hosono S."/>
            <person name="Hullo M.-F."/>
            <person name="Itaya M."/>
            <person name="Jones L.-M."/>
            <person name="Joris B."/>
            <person name="Karamata D."/>
            <person name="Kasahara Y."/>
            <person name="Klaerr-Blanchard M."/>
            <person name="Klein C."/>
            <person name="Kobayashi Y."/>
            <person name="Koetter P."/>
            <person name="Koningstein G."/>
            <person name="Krogh S."/>
            <person name="Kumano M."/>
            <person name="Kurita K."/>
            <person name="Lapidus A."/>
            <person name="Lardinois S."/>
            <person name="Lauber J."/>
            <person name="Lazarevic V."/>
            <person name="Lee S.-M."/>
            <person name="Levine A."/>
            <person name="Liu H."/>
            <person name="Masuda S."/>
            <person name="Mauel C."/>
            <person name="Medigue C."/>
            <person name="Medina N."/>
            <person name="Mellado R.P."/>
            <person name="Mizuno M."/>
            <person name="Moestl D."/>
            <person name="Nakai S."/>
            <person name="Noback M."/>
            <person name="Noone D."/>
            <person name="O'Reilly M."/>
            <person name="Ogawa K."/>
            <person name="Ogiwara A."/>
            <person name="Oudega B."/>
            <person name="Park S.-H."/>
            <person name="Parro V."/>
            <person name="Pohl T.M."/>
            <person name="Portetelle D."/>
            <person name="Porwollik S."/>
            <person name="Prescott A.M."/>
            <person name="Presecan E."/>
            <person name="Pujic P."/>
            <person name="Purnelle B."/>
            <person name="Rapoport G."/>
            <person name="Rey M."/>
            <person name="Reynolds S."/>
            <person name="Rieger M."/>
            <person name="Rivolta C."/>
            <person name="Rocha E."/>
            <person name="Roche B."/>
            <person name="Rose M."/>
            <person name="Sadaie Y."/>
            <person name="Sato T."/>
            <person name="Scanlan E."/>
            <person name="Schleich S."/>
            <person name="Schroeter R."/>
            <person name="Scoffone F."/>
            <person name="Sekiguchi J."/>
            <person name="Sekowska A."/>
            <person name="Seror S.J."/>
            <person name="Serror P."/>
            <person name="Shin B.-S."/>
            <person name="Soldo B."/>
            <person name="Sorokin A."/>
            <person name="Tacconi E."/>
            <person name="Takagi T."/>
            <person name="Takahashi H."/>
            <person name="Takemaru K."/>
            <person name="Takeuchi M."/>
            <person name="Tamakoshi A."/>
            <person name="Tanaka T."/>
            <person name="Terpstra P."/>
            <person name="Tognoni A."/>
            <person name="Tosato V."/>
            <person name="Uchiyama S."/>
            <person name="Vandenbol M."/>
            <person name="Vannier F."/>
            <person name="Vassarotti A."/>
            <person name="Viari A."/>
            <person name="Wambutt R."/>
            <person name="Wedler E."/>
            <person name="Wedler H."/>
            <person name="Weitzenegger T."/>
            <person name="Winters P."/>
            <person name="Wipat A."/>
            <person name="Yamamoto H."/>
            <person name="Yamane K."/>
            <person name="Yasumoto K."/>
            <person name="Yata K."/>
            <person name="Yoshida K."/>
            <person name="Yoshikawa H.-F."/>
            <person name="Zumstein E."/>
            <person name="Yoshikawa H."/>
            <person name="Danchin A."/>
        </authorList>
    </citation>
    <scope>NUCLEOTIDE SEQUENCE [LARGE SCALE GENOMIC DNA]</scope>
    <source>
        <strain>168</strain>
    </source>
</reference>
<keyword id="KW-1005">Bacterial flagellum biogenesis</keyword>
<keyword id="KW-1006">Bacterial flagellum protein export</keyword>
<keyword id="KW-1003">Cell membrane</keyword>
<keyword id="KW-0472">Membrane</keyword>
<keyword id="KW-0653">Protein transport</keyword>
<keyword id="KW-1185">Reference proteome</keyword>
<keyword id="KW-0812">Transmembrane</keyword>
<keyword id="KW-1133">Transmembrane helix</keyword>
<keyword id="KW-0813">Transport</keyword>
<proteinExistence type="inferred from homology"/>
<comment type="function">
    <text>May be involved in the export of flagellum proteins.</text>
</comment>
<comment type="subcellular location">
    <subcellularLocation>
        <location evidence="2">Cell membrane</location>
        <topology evidence="2">Multi-pass membrane protein</topology>
    </subcellularLocation>
</comment>
<comment type="similarity">
    <text evidence="2">Belongs to the type III secretion exporter family.</text>
</comment>
<evidence type="ECO:0000255" key="1"/>
<evidence type="ECO:0000305" key="2"/>